<organism>
    <name type="scientific">Helicobacter pylori (strain G27)</name>
    <dbReference type="NCBI Taxonomy" id="563041"/>
    <lineage>
        <taxon>Bacteria</taxon>
        <taxon>Pseudomonadati</taxon>
        <taxon>Campylobacterota</taxon>
        <taxon>Epsilonproteobacteria</taxon>
        <taxon>Campylobacterales</taxon>
        <taxon>Helicobacteraceae</taxon>
        <taxon>Helicobacter</taxon>
    </lineage>
</organism>
<evidence type="ECO:0000255" key="1">
    <source>
        <dbReference type="HAMAP-Rule" id="MF_00034"/>
    </source>
</evidence>
<evidence type="ECO:0000269" key="2">
    <source>
    </source>
</evidence>
<feature type="chain" id="PRO_1000090533" description="Crossover junction endodeoxyribonuclease RuvC">
    <location>
        <begin position="1"/>
        <end position="157"/>
    </location>
</feature>
<feature type="active site" evidence="1">
    <location>
        <position position="7"/>
    </location>
</feature>
<feature type="active site" evidence="1">
    <location>
        <position position="66"/>
    </location>
</feature>
<feature type="active site" evidence="1">
    <location>
        <position position="139"/>
    </location>
</feature>
<feature type="binding site" evidence="1">
    <location>
        <position position="7"/>
    </location>
    <ligand>
        <name>Mg(2+)</name>
        <dbReference type="ChEBI" id="CHEBI:18420"/>
        <label>1</label>
    </ligand>
</feature>
<feature type="binding site" evidence="1">
    <location>
        <position position="66"/>
    </location>
    <ligand>
        <name>Mg(2+)</name>
        <dbReference type="ChEBI" id="CHEBI:18420"/>
        <label>2</label>
    </ligand>
</feature>
<feature type="binding site" evidence="1">
    <location>
        <position position="139"/>
    </location>
    <ligand>
        <name>Mg(2+)</name>
        <dbReference type="ChEBI" id="CHEBI:18420"/>
        <label>1</label>
    </ligand>
</feature>
<sequence>MRILGIDPGSRKCGYAIISHASNKLSLITAGFINITTTRLQEQILDLIEALDCLLDRYEVNEVAIEDIFFAYNPKSVIKLAQFRGALSLKILERIGNFSEYTPLQVKKALTGNGKAAKEQVAFMVKRLLNITSEIKPLDISDAIAVAITHAQRLKLH</sequence>
<dbReference type="EC" id="3.1.21.10" evidence="1"/>
<dbReference type="EMBL" id="CP001173">
    <property type="protein sequence ID" value="ACI27586.1"/>
    <property type="molecule type" value="Genomic_DNA"/>
</dbReference>
<dbReference type="RefSeq" id="WP_001221148.1">
    <property type="nucleotide sequence ID" value="NC_011333.1"/>
</dbReference>
<dbReference type="SMR" id="B5Z7N7"/>
<dbReference type="KEGG" id="hpg:HPG27_831"/>
<dbReference type="HOGENOM" id="CLU_091257_3_0_7"/>
<dbReference type="Proteomes" id="UP000001735">
    <property type="component" value="Chromosome"/>
</dbReference>
<dbReference type="GO" id="GO:0005737">
    <property type="term" value="C:cytoplasm"/>
    <property type="evidence" value="ECO:0007669"/>
    <property type="project" value="UniProtKB-SubCell"/>
</dbReference>
<dbReference type="GO" id="GO:0048476">
    <property type="term" value="C:Holliday junction resolvase complex"/>
    <property type="evidence" value="ECO:0007669"/>
    <property type="project" value="UniProtKB-UniRule"/>
</dbReference>
<dbReference type="GO" id="GO:0008821">
    <property type="term" value="F:crossover junction DNA endonuclease activity"/>
    <property type="evidence" value="ECO:0007669"/>
    <property type="project" value="UniProtKB-UniRule"/>
</dbReference>
<dbReference type="GO" id="GO:0003677">
    <property type="term" value="F:DNA binding"/>
    <property type="evidence" value="ECO:0007669"/>
    <property type="project" value="UniProtKB-KW"/>
</dbReference>
<dbReference type="GO" id="GO:0000287">
    <property type="term" value="F:magnesium ion binding"/>
    <property type="evidence" value="ECO:0007669"/>
    <property type="project" value="UniProtKB-UniRule"/>
</dbReference>
<dbReference type="GO" id="GO:0006310">
    <property type="term" value="P:DNA recombination"/>
    <property type="evidence" value="ECO:0007669"/>
    <property type="project" value="UniProtKB-UniRule"/>
</dbReference>
<dbReference type="GO" id="GO:0006281">
    <property type="term" value="P:DNA repair"/>
    <property type="evidence" value="ECO:0007669"/>
    <property type="project" value="UniProtKB-UniRule"/>
</dbReference>
<dbReference type="CDD" id="cd16962">
    <property type="entry name" value="RuvC"/>
    <property type="match status" value="1"/>
</dbReference>
<dbReference type="FunFam" id="3.30.420.10:FF:000002">
    <property type="entry name" value="Crossover junction endodeoxyribonuclease RuvC"/>
    <property type="match status" value="1"/>
</dbReference>
<dbReference type="Gene3D" id="3.30.420.10">
    <property type="entry name" value="Ribonuclease H-like superfamily/Ribonuclease H"/>
    <property type="match status" value="1"/>
</dbReference>
<dbReference type="HAMAP" id="MF_00034">
    <property type="entry name" value="RuvC"/>
    <property type="match status" value="1"/>
</dbReference>
<dbReference type="InterPro" id="IPR012337">
    <property type="entry name" value="RNaseH-like_sf"/>
</dbReference>
<dbReference type="InterPro" id="IPR036397">
    <property type="entry name" value="RNaseH_sf"/>
</dbReference>
<dbReference type="InterPro" id="IPR020563">
    <property type="entry name" value="X-over_junc_endoDNase_Mg_BS"/>
</dbReference>
<dbReference type="InterPro" id="IPR002176">
    <property type="entry name" value="X-over_junc_endoDNase_RuvC"/>
</dbReference>
<dbReference type="NCBIfam" id="TIGR00228">
    <property type="entry name" value="ruvC"/>
    <property type="match status" value="1"/>
</dbReference>
<dbReference type="PANTHER" id="PTHR30194">
    <property type="entry name" value="CROSSOVER JUNCTION ENDODEOXYRIBONUCLEASE RUVC"/>
    <property type="match status" value="1"/>
</dbReference>
<dbReference type="PANTHER" id="PTHR30194:SF3">
    <property type="entry name" value="CROSSOVER JUNCTION ENDODEOXYRIBONUCLEASE RUVC"/>
    <property type="match status" value="1"/>
</dbReference>
<dbReference type="Pfam" id="PF02075">
    <property type="entry name" value="RuvC"/>
    <property type="match status" value="1"/>
</dbReference>
<dbReference type="PRINTS" id="PR00696">
    <property type="entry name" value="RSOLVASERUVC"/>
</dbReference>
<dbReference type="SUPFAM" id="SSF53098">
    <property type="entry name" value="Ribonuclease H-like"/>
    <property type="match status" value="1"/>
</dbReference>
<dbReference type="PROSITE" id="PS01321">
    <property type="entry name" value="RUVC"/>
    <property type="match status" value="1"/>
</dbReference>
<name>RUVC_HELPG</name>
<comment type="function">
    <text evidence="1">The RuvA-RuvB-RuvC complex processes Holliday junction (HJ) DNA during genetic recombination and DNA repair. Endonuclease that resolves HJ intermediates. Cleaves cruciform DNA by making single-stranded nicks across the HJ at symmetrical positions within the homologous arms, yielding a 5'-phosphate and a 3'-hydroxyl group; requires a central core of homology in the junction. The consensus cleavage sequence is 5'-(A/T)TT(C/G)-3'. Cleavage occurs on the 3'-side of the TT dinucleotide at the point of strand exchange. HJ branch migration catalyzed by RuvA-RuvB allows RuvC to scan DNA until it finds its consensus sequence, where it cleaves and resolves the cruciform DNA.</text>
</comment>
<comment type="function">
    <text evidence="2">Required for efficient infection in a mouse model system.</text>
</comment>
<comment type="catalytic activity">
    <reaction evidence="1">
        <text>Endonucleolytic cleavage at a junction such as a reciprocal single-stranded crossover between two homologous DNA duplexes (Holliday junction).</text>
        <dbReference type="EC" id="3.1.21.10"/>
    </reaction>
</comment>
<comment type="cofactor">
    <cofactor evidence="1">
        <name>Mg(2+)</name>
        <dbReference type="ChEBI" id="CHEBI:18420"/>
    </cofactor>
    <text evidence="1">Binds 2 Mg(2+) ion per subunit.</text>
</comment>
<comment type="subunit">
    <text evidence="1">Homodimer which binds Holliday junction (HJ) DNA. The HJ becomes 2-fold symmetrical on binding to RuvC with unstacked arms; it has a different conformation from HJ DNA in complex with RuvA. In the full resolvosome a probable DNA-RuvA(4)-RuvB(12)-RuvC(2) complex forms which resolves the HJ.</text>
</comment>
<comment type="subcellular location">
    <subcellularLocation>
        <location evidence="1">Cytoplasm</location>
    </subcellularLocation>
</comment>
<comment type="disruption phenotype">
    <text evidence="2">No visible growth defect in vitro in strains G27 and SS1. 20- to 30-fold reduction in transformation efficiency with chromosome or plasmid DNA in both strains. Increased sensitivity to mitomycin C, UV light, antibiotics metronidazol, levofloxacin, oxidative stress inducers hydrogen peroxide, cumene hydroperoxide and methyl viologen, in both strains. Strain SS1 deletion survived about 100-fold less well in mouse macrophages, bacteria deleted for ruvC have a 50% infective dose approximately 100-fold higher than that of the wild-type while the infection was spontaneously cleared from gastric mucosa between 36 and 67 days post-infection.</text>
</comment>
<comment type="similarity">
    <text evidence="1">Belongs to the RuvC family.</text>
</comment>
<gene>
    <name evidence="1" type="primary">ruvC</name>
    <name type="ordered locus">HPG27_831</name>
</gene>
<reference key="1">
    <citation type="journal article" date="2009" name="J. Bacteriol.">
        <title>The complete genome sequence of Helicobacter pylori strain G27.</title>
        <authorList>
            <person name="Baltrus D.A."/>
            <person name="Amieva M.R."/>
            <person name="Covacci A."/>
            <person name="Lowe T.M."/>
            <person name="Merrell D.S."/>
            <person name="Ottemann K.M."/>
            <person name="Stein M."/>
            <person name="Salama N.R."/>
            <person name="Guillemin K."/>
        </authorList>
    </citation>
    <scope>NUCLEOTIDE SEQUENCE [LARGE SCALE GENOMIC DNA]</scope>
    <source>
        <strain>G27</strain>
    </source>
</reference>
<reference key="2">
    <citation type="journal article" date="2003" name="Infect. Immun.">
        <title>Helicobacter pylori mutants defective in RuvC Holliday junction resolvase display reduced macrophage survival and spontaneous clearance from the murine gastric mucosa.</title>
        <authorList>
            <person name="Loughlin M.F."/>
            <person name="Barnard F.M."/>
            <person name="Jenkins D."/>
            <person name="Sharples G.J."/>
            <person name="Jenks P.J."/>
        </authorList>
    </citation>
    <scope>FUNCTION IN INFECTION</scope>
    <scope>DISRUPTION PHENOTYPE</scope>
    <source>
        <strain>G27</strain>
        <strain>SS1</strain>
    </source>
</reference>
<protein>
    <recommendedName>
        <fullName evidence="1">Crossover junction endodeoxyribonuclease RuvC</fullName>
        <ecNumber evidence="1">3.1.21.10</ecNumber>
    </recommendedName>
    <alternativeName>
        <fullName evidence="1">Holliday junction nuclease RuvC</fullName>
    </alternativeName>
    <alternativeName>
        <fullName evidence="1">Holliday junction resolvase RuvC</fullName>
    </alternativeName>
</protein>
<keyword id="KW-0963">Cytoplasm</keyword>
<keyword id="KW-0227">DNA damage</keyword>
<keyword id="KW-0233">DNA recombination</keyword>
<keyword id="KW-0234">DNA repair</keyword>
<keyword id="KW-0238">DNA-binding</keyword>
<keyword id="KW-0255">Endonuclease</keyword>
<keyword id="KW-0378">Hydrolase</keyword>
<keyword id="KW-0460">Magnesium</keyword>
<keyword id="KW-0479">Metal-binding</keyword>
<keyword id="KW-0540">Nuclease</keyword>
<keyword id="KW-1185">Reference proteome</keyword>
<keyword id="KW-0843">Virulence</keyword>
<proteinExistence type="evidence at protein level"/>
<accession>B5Z7N7</accession>